<sequence>MRVTDFSFELPESLIAHYPQPERSRCRLLSLEGPTGALTHGTFTDLLDKLNPGDLLVFNNTRVIPARLFGRKASGGKIEVLVERMLDDKRILAHIRASKAPKPGTELLLGDDESIHATMTARHGALFEVEFNDPRPVLDILNAIGHMPLPPYIDRPDEDADRELYQTVYSEKPGAVAAPTAGLHFDEPLLAALREKGVEMAFVTLHVGAGTFQPVRVDTIEDHIMHSEYAEVPQEVVDAVLAAKARGNRVIAVGTTSVRSLESAAQAAKSDLIEPFFGDTQIFIYPGYQYKVIDALITNFHLPESTLIMLVSAFAGYQHTMNAYKTAVEQKYRFFSYGDAMFITYNPRAISERP</sequence>
<gene>
    <name evidence="1" type="primary">queA</name>
    <name type="ordered locus">SSPA2162</name>
</gene>
<evidence type="ECO:0000255" key="1">
    <source>
        <dbReference type="HAMAP-Rule" id="MF_00113"/>
    </source>
</evidence>
<reference key="1">
    <citation type="journal article" date="2009" name="BMC Genomics">
        <title>Pseudogene accumulation in the evolutionary histories of Salmonella enterica serovars Paratyphi A and Typhi.</title>
        <authorList>
            <person name="Holt K.E."/>
            <person name="Thomson N.R."/>
            <person name="Wain J."/>
            <person name="Langridge G.C."/>
            <person name="Hasan R."/>
            <person name="Bhutta Z.A."/>
            <person name="Quail M.A."/>
            <person name="Norbertczak H."/>
            <person name="Walker D."/>
            <person name="Simmonds M."/>
            <person name="White B."/>
            <person name="Bason N."/>
            <person name="Mungall K."/>
            <person name="Dougan G."/>
            <person name="Parkhill J."/>
        </authorList>
    </citation>
    <scope>NUCLEOTIDE SEQUENCE [LARGE SCALE GENOMIC DNA]</scope>
    <source>
        <strain>AKU_12601</strain>
    </source>
</reference>
<proteinExistence type="inferred from homology"/>
<feature type="chain" id="PRO_1000094815" description="S-adenosylmethionine:tRNA ribosyltransferase-isomerase">
    <location>
        <begin position="1"/>
        <end position="354"/>
    </location>
</feature>
<protein>
    <recommendedName>
        <fullName evidence="1">S-adenosylmethionine:tRNA ribosyltransferase-isomerase</fullName>
        <ecNumber evidence="1">2.4.99.17</ecNumber>
    </recommendedName>
    <alternativeName>
        <fullName evidence="1">Queuosine biosynthesis protein QueA</fullName>
    </alternativeName>
</protein>
<dbReference type="EC" id="2.4.99.17" evidence="1"/>
<dbReference type="EMBL" id="FM200053">
    <property type="protein sequence ID" value="CAR60372.1"/>
    <property type="molecule type" value="Genomic_DNA"/>
</dbReference>
<dbReference type="RefSeq" id="WP_001266531.1">
    <property type="nucleotide sequence ID" value="NC_011147.1"/>
</dbReference>
<dbReference type="SMR" id="B5BDC9"/>
<dbReference type="KEGG" id="sek:SSPA2162"/>
<dbReference type="HOGENOM" id="CLU_039110_1_0_6"/>
<dbReference type="UniPathway" id="UPA00392"/>
<dbReference type="Proteomes" id="UP000001869">
    <property type="component" value="Chromosome"/>
</dbReference>
<dbReference type="GO" id="GO:0005737">
    <property type="term" value="C:cytoplasm"/>
    <property type="evidence" value="ECO:0007669"/>
    <property type="project" value="UniProtKB-SubCell"/>
</dbReference>
<dbReference type="GO" id="GO:0051075">
    <property type="term" value="F:S-adenosylmethionine:tRNA ribosyltransferase-isomerase activity"/>
    <property type="evidence" value="ECO:0007669"/>
    <property type="project" value="UniProtKB-EC"/>
</dbReference>
<dbReference type="GO" id="GO:0008616">
    <property type="term" value="P:queuosine biosynthetic process"/>
    <property type="evidence" value="ECO:0007669"/>
    <property type="project" value="UniProtKB-UniRule"/>
</dbReference>
<dbReference type="GO" id="GO:0002099">
    <property type="term" value="P:tRNA wobble guanine modification"/>
    <property type="evidence" value="ECO:0007669"/>
    <property type="project" value="TreeGrafter"/>
</dbReference>
<dbReference type="FunFam" id="2.40.10.240:FF:000001">
    <property type="entry name" value="S-adenosylmethionine:tRNA ribosyltransferase-isomerase"/>
    <property type="match status" value="1"/>
</dbReference>
<dbReference type="FunFam" id="3.40.1780.10:FF:000001">
    <property type="entry name" value="S-adenosylmethionine:tRNA ribosyltransferase-isomerase"/>
    <property type="match status" value="1"/>
</dbReference>
<dbReference type="Gene3D" id="2.40.10.240">
    <property type="entry name" value="QueA-like"/>
    <property type="match status" value="1"/>
</dbReference>
<dbReference type="Gene3D" id="3.40.1780.10">
    <property type="entry name" value="QueA-like"/>
    <property type="match status" value="1"/>
</dbReference>
<dbReference type="HAMAP" id="MF_00113">
    <property type="entry name" value="QueA"/>
    <property type="match status" value="1"/>
</dbReference>
<dbReference type="InterPro" id="IPR003699">
    <property type="entry name" value="QueA"/>
</dbReference>
<dbReference type="InterPro" id="IPR042118">
    <property type="entry name" value="QueA_dom1"/>
</dbReference>
<dbReference type="InterPro" id="IPR042119">
    <property type="entry name" value="QueA_dom2"/>
</dbReference>
<dbReference type="InterPro" id="IPR036100">
    <property type="entry name" value="QueA_sf"/>
</dbReference>
<dbReference type="NCBIfam" id="NF001140">
    <property type="entry name" value="PRK00147.1"/>
    <property type="match status" value="1"/>
</dbReference>
<dbReference type="NCBIfam" id="TIGR00113">
    <property type="entry name" value="queA"/>
    <property type="match status" value="1"/>
</dbReference>
<dbReference type="PANTHER" id="PTHR30307">
    <property type="entry name" value="S-ADENOSYLMETHIONINE:TRNA RIBOSYLTRANSFERASE-ISOMERASE"/>
    <property type="match status" value="1"/>
</dbReference>
<dbReference type="PANTHER" id="PTHR30307:SF0">
    <property type="entry name" value="S-ADENOSYLMETHIONINE:TRNA RIBOSYLTRANSFERASE-ISOMERASE"/>
    <property type="match status" value="1"/>
</dbReference>
<dbReference type="Pfam" id="PF02547">
    <property type="entry name" value="Queuosine_synth"/>
    <property type="match status" value="1"/>
</dbReference>
<dbReference type="SUPFAM" id="SSF111337">
    <property type="entry name" value="QueA-like"/>
    <property type="match status" value="1"/>
</dbReference>
<comment type="function">
    <text evidence="1">Transfers and isomerizes the ribose moiety from AdoMet to the 7-aminomethyl group of 7-deazaguanine (preQ1-tRNA) to give epoxyqueuosine (oQ-tRNA).</text>
</comment>
<comment type="catalytic activity">
    <reaction evidence="1">
        <text>7-aminomethyl-7-carbaguanosine(34) in tRNA + S-adenosyl-L-methionine = epoxyqueuosine(34) in tRNA + adenine + L-methionine + 2 H(+)</text>
        <dbReference type="Rhea" id="RHEA:32155"/>
        <dbReference type="Rhea" id="RHEA-COMP:10342"/>
        <dbReference type="Rhea" id="RHEA-COMP:18582"/>
        <dbReference type="ChEBI" id="CHEBI:15378"/>
        <dbReference type="ChEBI" id="CHEBI:16708"/>
        <dbReference type="ChEBI" id="CHEBI:57844"/>
        <dbReference type="ChEBI" id="CHEBI:59789"/>
        <dbReference type="ChEBI" id="CHEBI:82833"/>
        <dbReference type="ChEBI" id="CHEBI:194443"/>
        <dbReference type="EC" id="2.4.99.17"/>
    </reaction>
</comment>
<comment type="pathway">
    <text evidence="1">tRNA modification; tRNA-queuosine biosynthesis.</text>
</comment>
<comment type="subunit">
    <text evidence="1">Monomer.</text>
</comment>
<comment type="subcellular location">
    <subcellularLocation>
        <location evidence="1">Cytoplasm</location>
    </subcellularLocation>
</comment>
<comment type="similarity">
    <text evidence="1">Belongs to the QueA family.</text>
</comment>
<organism>
    <name type="scientific">Salmonella paratyphi A (strain AKU_12601)</name>
    <dbReference type="NCBI Taxonomy" id="554290"/>
    <lineage>
        <taxon>Bacteria</taxon>
        <taxon>Pseudomonadati</taxon>
        <taxon>Pseudomonadota</taxon>
        <taxon>Gammaproteobacteria</taxon>
        <taxon>Enterobacterales</taxon>
        <taxon>Enterobacteriaceae</taxon>
        <taxon>Salmonella</taxon>
    </lineage>
</organism>
<accession>B5BDC9</accession>
<keyword id="KW-0963">Cytoplasm</keyword>
<keyword id="KW-0671">Queuosine biosynthesis</keyword>
<keyword id="KW-0949">S-adenosyl-L-methionine</keyword>
<keyword id="KW-0808">Transferase</keyword>
<name>QUEA_SALPK</name>